<organism>
    <name type="scientific">Brucella anthropi (strain ATCC 49188 / DSM 6882 / CCUG 24695 / JCM 21032 / LMG 3331 / NBRC 15819 / NCTC 12168 / Alc 37)</name>
    <name type="common">Ochrobactrum anthropi</name>
    <dbReference type="NCBI Taxonomy" id="439375"/>
    <lineage>
        <taxon>Bacteria</taxon>
        <taxon>Pseudomonadati</taxon>
        <taxon>Pseudomonadota</taxon>
        <taxon>Alphaproteobacteria</taxon>
        <taxon>Hyphomicrobiales</taxon>
        <taxon>Brucellaceae</taxon>
        <taxon>Brucella/Ochrobactrum group</taxon>
        <taxon>Brucella</taxon>
    </lineage>
</organism>
<proteinExistence type="inferred from homology"/>
<feature type="chain" id="PRO_0000351891" description="Protein-L-isoaspartate O-methyltransferase">
    <location>
        <begin position="1"/>
        <end position="217"/>
    </location>
</feature>
<feature type="active site" evidence="1">
    <location>
        <position position="61"/>
    </location>
</feature>
<sequence length="217" mass="23632">MRNFEKARVQMVEQLVHRGIHDTRVLEAMGTLAREKFIDEGFIEFAYDDTPLPIKNGQTISQPYMTAFMIASAHLGGGEHVLEIGTGSGYAAAIIAQIAGQIFTVERYSTLAEAAQQRFEDLGCDNIHVRTGDGSNGWPEEAPFDAIIVAAGAPEIPSPLKEQLKPGGRLIIPVGSMAGTQRLLCITRKSTEEFDEEDLGGVMFVPLVGNKAWPDMN</sequence>
<protein>
    <recommendedName>
        <fullName evidence="1">Protein-L-isoaspartate O-methyltransferase</fullName>
        <ecNumber evidence="1">2.1.1.77</ecNumber>
    </recommendedName>
    <alternativeName>
        <fullName evidence="1">L-isoaspartyl protein carboxyl methyltransferase</fullName>
    </alternativeName>
    <alternativeName>
        <fullName evidence="1">Protein L-isoaspartyl methyltransferase</fullName>
    </alternativeName>
    <alternativeName>
        <fullName evidence="1">Protein-beta-aspartate methyltransferase</fullName>
        <shortName evidence="1">PIMT</shortName>
    </alternativeName>
</protein>
<dbReference type="EC" id="2.1.1.77" evidence="1"/>
<dbReference type="EMBL" id="CP000759">
    <property type="protein sequence ID" value="ABS16985.1"/>
    <property type="molecule type" value="Genomic_DNA"/>
</dbReference>
<dbReference type="RefSeq" id="WP_012093572.1">
    <property type="nucleotide sequence ID" value="NC_009668.1"/>
</dbReference>
<dbReference type="SMR" id="A6X6Y1"/>
<dbReference type="STRING" id="439375.Oant_4285"/>
<dbReference type="KEGG" id="oan:Oant_4285"/>
<dbReference type="eggNOG" id="COG2518">
    <property type="taxonomic scope" value="Bacteria"/>
</dbReference>
<dbReference type="HOGENOM" id="CLU_055432_2_0_5"/>
<dbReference type="Proteomes" id="UP000002301">
    <property type="component" value="Chromosome 2"/>
</dbReference>
<dbReference type="GO" id="GO:0005737">
    <property type="term" value="C:cytoplasm"/>
    <property type="evidence" value="ECO:0007669"/>
    <property type="project" value="UniProtKB-SubCell"/>
</dbReference>
<dbReference type="GO" id="GO:0004719">
    <property type="term" value="F:protein-L-isoaspartate (D-aspartate) O-methyltransferase activity"/>
    <property type="evidence" value="ECO:0007669"/>
    <property type="project" value="UniProtKB-UniRule"/>
</dbReference>
<dbReference type="GO" id="GO:0032259">
    <property type="term" value="P:methylation"/>
    <property type="evidence" value="ECO:0007669"/>
    <property type="project" value="UniProtKB-KW"/>
</dbReference>
<dbReference type="GO" id="GO:0036211">
    <property type="term" value="P:protein modification process"/>
    <property type="evidence" value="ECO:0007669"/>
    <property type="project" value="UniProtKB-UniRule"/>
</dbReference>
<dbReference type="GO" id="GO:0030091">
    <property type="term" value="P:protein repair"/>
    <property type="evidence" value="ECO:0007669"/>
    <property type="project" value="UniProtKB-UniRule"/>
</dbReference>
<dbReference type="CDD" id="cd02440">
    <property type="entry name" value="AdoMet_MTases"/>
    <property type="match status" value="1"/>
</dbReference>
<dbReference type="FunFam" id="3.40.50.150:FF:000010">
    <property type="entry name" value="Protein-L-isoaspartate O-methyltransferase"/>
    <property type="match status" value="1"/>
</dbReference>
<dbReference type="Gene3D" id="3.40.50.150">
    <property type="entry name" value="Vaccinia Virus protein VP39"/>
    <property type="match status" value="1"/>
</dbReference>
<dbReference type="HAMAP" id="MF_00090">
    <property type="entry name" value="PIMT"/>
    <property type="match status" value="1"/>
</dbReference>
<dbReference type="InterPro" id="IPR000682">
    <property type="entry name" value="PCMT"/>
</dbReference>
<dbReference type="InterPro" id="IPR029063">
    <property type="entry name" value="SAM-dependent_MTases_sf"/>
</dbReference>
<dbReference type="NCBIfam" id="TIGR00080">
    <property type="entry name" value="pimt"/>
    <property type="match status" value="1"/>
</dbReference>
<dbReference type="NCBIfam" id="NF001453">
    <property type="entry name" value="PRK00312.1"/>
    <property type="match status" value="1"/>
</dbReference>
<dbReference type="PANTHER" id="PTHR11579">
    <property type="entry name" value="PROTEIN-L-ISOASPARTATE O-METHYLTRANSFERASE"/>
    <property type="match status" value="1"/>
</dbReference>
<dbReference type="PANTHER" id="PTHR11579:SF0">
    <property type="entry name" value="PROTEIN-L-ISOASPARTATE(D-ASPARTATE) O-METHYLTRANSFERASE"/>
    <property type="match status" value="1"/>
</dbReference>
<dbReference type="Pfam" id="PF01135">
    <property type="entry name" value="PCMT"/>
    <property type="match status" value="1"/>
</dbReference>
<dbReference type="SUPFAM" id="SSF53335">
    <property type="entry name" value="S-adenosyl-L-methionine-dependent methyltransferases"/>
    <property type="match status" value="1"/>
</dbReference>
<dbReference type="PROSITE" id="PS01279">
    <property type="entry name" value="PCMT"/>
    <property type="match status" value="1"/>
</dbReference>
<name>PIMT_BRUA4</name>
<accession>A6X6Y1</accession>
<reference key="1">
    <citation type="journal article" date="2011" name="J. Bacteriol.">
        <title>Genome of Ochrobactrum anthropi ATCC 49188 T, a versatile opportunistic pathogen and symbiont of several eukaryotic hosts.</title>
        <authorList>
            <person name="Chain P.S."/>
            <person name="Lang D.M."/>
            <person name="Comerci D.J."/>
            <person name="Malfatti S.A."/>
            <person name="Vergez L.M."/>
            <person name="Shin M."/>
            <person name="Ugalde R.A."/>
            <person name="Garcia E."/>
            <person name="Tolmasky M.E."/>
        </authorList>
    </citation>
    <scope>NUCLEOTIDE SEQUENCE [LARGE SCALE GENOMIC DNA]</scope>
    <source>
        <strain>ATCC 49188 / DSM 6882 / CCUG 24695 / JCM 21032 / LMG 3331 / NBRC 15819 / NCTC 12168 / Alc 37</strain>
    </source>
</reference>
<evidence type="ECO:0000255" key="1">
    <source>
        <dbReference type="HAMAP-Rule" id="MF_00090"/>
    </source>
</evidence>
<gene>
    <name evidence="1" type="primary">pcm</name>
    <name type="ordered locus">Oant_4285</name>
</gene>
<keyword id="KW-0963">Cytoplasm</keyword>
<keyword id="KW-0489">Methyltransferase</keyword>
<keyword id="KW-1185">Reference proteome</keyword>
<keyword id="KW-0949">S-adenosyl-L-methionine</keyword>
<keyword id="KW-0808">Transferase</keyword>
<comment type="function">
    <text evidence="1">Catalyzes the methyl esterification of L-isoaspartyl residues in peptides and proteins that result from spontaneous decomposition of normal L-aspartyl and L-asparaginyl residues. It plays a role in the repair and/or degradation of damaged proteins.</text>
</comment>
<comment type="catalytic activity">
    <reaction evidence="1">
        <text>[protein]-L-isoaspartate + S-adenosyl-L-methionine = [protein]-L-isoaspartate alpha-methyl ester + S-adenosyl-L-homocysteine</text>
        <dbReference type="Rhea" id="RHEA:12705"/>
        <dbReference type="Rhea" id="RHEA-COMP:12143"/>
        <dbReference type="Rhea" id="RHEA-COMP:12144"/>
        <dbReference type="ChEBI" id="CHEBI:57856"/>
        <dbReference type="ChEBI" id="CHEBI:59789"/>
        <dbReference type="ChEBI" id="CHEBI:90596"/>
        <dbReference type="ChEBI" id="CHEBI:90598"/>
        <dbReference type="EC" id="2.1.1.77"/>
    </reaction>
</comment>
<comment type="subcellular location">
    <subcellularLocation>
        <location evidence="1">Cytoplasm</location>
    </subcellularLocation>
</comment>
<comment type="similarity">
    <text evidence="1">Belongs to the methyltransferase superfamily. L-isoaspartyl/D-aspartyl protein methyltransferase family.</text>
</comment>